<name>FUM17_GIBM7</name>
<sequence>MFKATTSARHRPGQGNSLSTLMARYNNQGLQRYSLKDKEHKIRRRKRSWGFQHSVILKNSWALPLLLTIVLPVIYAIHPVESKFFGHFILLSYRHGSVTDGMAFPVAQYKKGLWDLAFVAFYANALFLARKFIMKRLLRPLALKNNVSTMGKQQRFMEQMYTACYFAVMGPFGLYVMKTTPGLWIFQTHGMYDSYPHRSLGPAIKFYYLLQAAYWVQQSVVLVLRLEKPRKDHMELTVHHIITITLIALSYRFHFTHIGISMYITHDISDLFLATSKSLNYLSHRLQTPAFCLCVIAWIYLRHYTNWRILYSVLTEFRTVGPFELDWEAEQYKCQLSQFITFGLLATLQTLNIIWLYCLLRNAYRLLFLRIAKDDRSDTDKSEIEHGD</sequence>
<proteinExistence type="evidence at transcript level"/>
<dbReference type="EC" id="2.3.1.-" evidence="8"/>
<dbReference type="EMBL" id="AF155773">
    <property type="protein sequence ID" value="AAN74820.1"/>
    <property type="molecule type" value="Genomic_DNA"/>
</dbReference>
<dbReference type="EMBL" id="CM000578">
    <property type="protein sequence ID" value="EWG36210.1"/>
    <property type="molecule type" value="Genomic_DNA"/>
</dbReference>
<dbReference type="RefSeq" id="XP_018742401.1">
    <property type="nucleotide sequence ID" value="XM_018886765.1"/>
</dbReference>
<dbReference type="SMR" id="W7LKY5"/>
<dbReference type="STRING" id="334819.W7LKY5"/>
<dbReference type="GlyCosmos" id="W7LKY5">
    <property type="glycosylation" value="1 site, No reported glycans"/>
</dbReference>
<dbReference type="EnsemblFungi" id="FVEG_00327T0">
    <property type="protein sequence ID" value="FVEG_00327T0"/>
    <property type="gene ID" value="FVEG_00327"/>
</dbReference>
<dbReference type="GeneID" id="30058704"/>
<dbReference type="KEGG" id="fvr:FVEG_00327"/>
<dbReference type="VEuPathDB" id="FungiDB:FVEG_00327"/>
<dbReference type="eggNOG" id="KOG1607">
    <property type="taxonomic scope" value="Eukaryota"/>
</dbReference>
<dbReference type="HOGENOM" id="CLU_028277_4_0_1"/>
<dbReference type="OrthoDB" id="87027at110618"/>
<dbReference type="Proteomes" id="UP000009096">
    <property type="component" value="Chromosome 1"/>
</dbReference>
<dbReference type="GO" id="GO:0016020">
    <property type="term" value="C:membrane"/>
    <property type="evidence" value="ECO:0007669"/>
    <property type="project" value="UniProtKB-SubCell"/>
</dbReference>
<dbReference type="GO" id="GO:0050291">
    <property type="term" value="F:sphingosine N-acyltransferase activity"/>
    <property type="evidence" value="ECO:0007669"/>
    <property type="project" value="InterPro"/>
</dbReference>
<dbReference type="GO" id="GO:0046513">
    <property type="term" value="P:ceramide biosynthetic process"/>
    <property type="evidence" value="ECO:0007669"/>
    <property type="project" value="InterPro"/>
</dbReference>
<dbReference type="InterPro" id="IPR016439">
    <property type="entry name" value="Lag1/Lac1-like"/>
</dbReference>
<dbReference type="InterPro" id="IPR006634">
    <property type="entry name" value="TLC-dom"/>
</dbReference>
<dbReference type="PANTHER" id="PTHR12560:SF11">
    <property type="entry name" value="CERAMIDE SYNTHASE LAC1-RELATED"/>
    <property type="match status" value="1"/>
</dbReference>
<dbReference type="PANTHER" id="PTHR12560">
    <property type="entry name" value="LONGEVITY ASSURANCE FACTOR 1 LAG1"/>
    <property type="match status" value="1"/>
</dbReference>
<dbReference type="Pfam" id="PF03798">
    <property type="entry name" value="TRAM_LAG1_CLN8"/>
    <property type="match status" value="1"/>
</dbReference>
<dbReference type="PIRSF" id="PIRSF005225">
    <property type="entry name" value="LAG1_LAC1"/>
    <property type="match status" value="1"/>
</dbReference>
<dbReference type="SMART" id="SM00724">
    <property type="entry name" value="TLC"/>
    <property type="match status" value="1"/>
</dbReference>
<dbReference type="PROSITE" id="PS50922">
    <property type="entry name" value="TLC"/>
    <property type="match status" value="1"/>
</dbReference>
<accession>W7LKY5</accession>
<accession>Q8J2Q3</accession>
<evidence type="ECO:0000255" key="1"/>
<evidence type="ECO:0000255" key="2">
    <source>
        <dbReference type="PROSITE-ProRule" id="PRU00205"/>
    </source>
</evidence>
<evidence type="ECO:0000255" key="3">
    <source>
        <dbReference type="PROSITE-ProRule" id="PRU00498"/>
    </source>
</evidence>
<evidence type="ECO:0000269" key="4">
    <source>
    </source>
</evidence>
<evidence type="ECO:0000269" key="5">
    <source>
    </source>
</evidence>
<evidence type="ECO:0000269" key="6">
    <source>
    </source>
</evidence>
<evidence type="ECO:0000303" key="7">
    <source>
    </source>
</evidence>
<evidence type="ECO:0000305" key="8"/>
<evidence type="ECO:0000305" key="9">
    <source>
    </source>
</evidence>
<evidence type="ECO:0000305" key="10">
    <source>
    </source>
</evidence>
<gene>
    <name evidence="7" type="primary">FUM17</name>
    <name type="ORF">FVEG_00327</name>
</gene>
<comment type="function">
    <text evidence="4 5 6 10">Sphingosine N-acyltransferase-like protein; part of the gene cluster that mediates the biosynthesis of fumonisins B1 (FB1), B2 (FB2), B3 (FB3), and B4 (FB4), which are carcinogenic mycotoxins (PubMed:12620260, PubMed:32546615). May contribute to the biosynthesis of ceramide via interaction with Cer3 (PubMed:32546615). Does not confer resistance to FB1 (PubMed:38922130). The biosynthesis starts with the FUM1-catalyzed carbon chain assembly from one molecule of acetyl-CoA, eight molecules of malonyl-CoA, and two molecules of methionine (in S-adenosyl form). The C18 polyketide chain is released from the enzyme by a nucleophilic attack of a carbanion, which is derived from R-carbon of alanine by decarboxylation, on the carbonyl carbon of polyketide acyl chain. This step is catalyzed by the pyridoxal 5'-phosphate-dependent aminoacyl transferase FUM8. The resultant 3-keto intermediate is then stereospecifically reduced to a 3-hydroxyl product by reductase FUM13. Subsequent oxidations at C-10 by the cytochrome P450 monooxygenase FUM2, C-14 and C-15 by FUM6, FUM12 or FUM15, tricarballylic esterification of the hydroxyl groups on C-14 and C-15 by acyltransferase FUM14, and C-5 hydroxylation by 2-keto-glutarate-dependent dioxygenase FUM3 furnish the biosynthesis of fumonisins. The tricarballylic moieties are most likely derived from the citric acid cycle, and their addition to the carbon backbone may involve FUM7, FUM10, FUM11 and FUM14 (Probable).</text>
</comment>
<comment type="pathway">
    <text evidence="4">Mycotoxin biosynthesis.</text>
</comment>
<comment type="subcellular location">
    <subcellularLocation>
        <location evidence="5">Endoplasmic reticulum membrane</location>
        <topology evidence="1">Multi-pass membrane protein</topology>
    </subcellularLocation>
</comment>
<comment type="induction">
    <text evidence="5">Induced by exogenous FB1.</text>
</comment>
<comment type="disruption phenotype">
    <text evidence="4 5 6">Does not affect the production of fumonisins B1, B2 and B3 (PubMed:12620260, PubMed:32546615). Double knockout of FUM17 and FUM18 does not reduce resistance to FB1 (PubMed:38922130).</text>
</comment>
<comment type="similarity">
    <text evidence="8">Belongs to the sphingosine N-acyltransferase family.</text>
</comment>
<protein>
    <recommendedName>
        <fullName evidence="9">Sphingosine N-acyltransferase-like protein FUM17</fullName>
        <ecNumber evidence="8">2.3.1.-</ecNumber>
    </recommendedName>
    <alternativeName>
        <fullName evidence="7">Fumonisin biosynthesis cluster protein 17</fullName>
    </alternativeName>
</protein>
<keyword id="KW-0256">Endoplasmic reticulum</keyword>
<keyword id="KW-0325">Glycoprotein</keyword>
<keyword id="KW-0472">Membrane</keyword>
<keyword id="KW-1185">Reference proteome</keyword>
<keyword id="KW-0808">Transferase</keyword>
<keyword id="KW-0812">Transmembrane</keyword>
<keyword id="KW-1133">Transmembrane helix</keyword>
<feature type="chain" id="PRO_0000441151" description="Sphingosine N-acyltransferase-like protein FUM17">
    <location>
        <begin position="1"/>
        <end position="388"/>
    </location>
</feature>
<feature type="transmembrane region" description="Helical" evidence="1">
    <location>
        <begin position="60"/>
        <end position="80"/>
    </location>
</feature>
<feature type="transmembrane region" description="Helical" evidence="1">
    <location>
        <begin position="113"/>
        <end position="133"/>
    </location>
</feature>
<feature type="transmembrane region" description="Helical" evidence="1">
    <location>
        <begin position="166"/>
        <end position="186"/>
    </location>
</feature>
<feature type="transmembrane region" description="Helical" evidence="1">
    <location>
        <begin position="204"/>
        <end position="224"/>
    </location>
</feature>
<feature type="transmembrane region" description="Helical" evidence="1">
    <location>
        <begin position="241"/>
        <end position="261"/>
    </location>
</feature>
<feature type="transmembrane region" description="Helical" evidence="1">
    <location>
        <begin position="339"/>
        <end position="359"/>
    </location>
</feature>
<feature type="domain" description="TLC" evidence="2">
    <location>
        <begin position="151"/>
        <end position="368"/>
    </location>
</feature>
<feature type="glycosylation site" description="N-linked (GlcNAc...) asparagine" evidence="3">
    <location>
        <position position="146"/>
    </location>
</feature>
<organism>
    <name type="scientific">Gibberella moniliformis (strain M3125 / FGSC 7600)</name>
    <name type="common">Maize ear and stalk rot fungus</name>
    <name type="synonym">Fusarium verticillioides</name>
    <dbReference type="NCBI Taxonomy" id="334819"/>
    <lineage>
        <taxon>Eukaryota</taxon>
        <taxon>Fungi</taxon>
        <taxon>Dikarya</taxon>
        <taxon>Ascomycota</taxon>
        <taxon>Pezizomycotina</taxon>
        <taxon>Sordariomycetes</taxon>
        <taxon>Hypocreomycetidae</taxon>
        <taxon>Hypocreales</taxon>
        <taxon>Nectriaceae</taxon>
        <taxon>Fusarium</taxon>
        <taxon>Fusarium fujikuroi species complex</taxon>
    </lineage>
</organism>
<reference key="1">
    <citation type="journal article" date="2003" name="Fungal Genet. Biol.">
        <title>Co-expression of 15 contiguous genes delineates a fumonisin biosynthetic gene cluster in Gibberella moniliformis.</title>
        <authorList>
            <person name="Proctor R.H."/>
            <person name="Brown D.W."/>
            <person name="Plattner R.D."/>
            <person name="Desjardins A.E."/>
        </authorList>
    </citation>
    <scope>NUCLEOTIDE SEQUENCE [GENOMIC DNA]</scope>
    <scope>DISRUPTION PHENOTYPE</scope>
    <scope>PATHWAY</scope>
    <source>
        <strain>M3125 / FGSC 7600</strain>
    </source>
</reference>
<reference key="2">
    <citation type="journal article" date="2010" name="Nature">
        <title>Comparative genomics reveals mobile pathogenicity chromosomes in Fusarium.</title>
        <authorList>
            <person name="Ma L.-J."/>
            <person name="van der Does H.C."/>
            <person name="Borkovich K.A."/>
            <person name="Coleman J.J."/>
            <person name="Daboussi M.-J."/>
            <person name="Di Pietro A."/>
            <person name="Dufresne M."/>
            <person name="Freitag M."/>
            <person name="Grabherr M."/>
            <person name="Henrissat B."/>
            <person name="Houterman P.M."/>
            <person name="Kang S."/>
            <person name="Shim W.-B."/>
            <person name="Woloshuk C."/>
            <person name="Xie X."/>
            <person name="Xu J.-R."/>
            <person name="Antoniw J."/>
            <person name="Baker S.E."/>
            <person name="Bluhm B.H."/>
            <person name="Breakspear A."/>
            <person name="Brown D.W."/>
            <person name="Butchko R.A.E."/>
            <person name="Chapman S."/>
            <person name="Coulson R."/>
            <person name="Coutinho P.M."/>
            <person name="Danchin E.G.J."/>
            <person name="Diener A."/>
            <person name="Gale L.R."/>
            <person name="Gardiner D.M."/>
            <person name="Goff S."/>
            <person name="Hammond-Kosack K.E."/>
            <person name="Hilburn K."/>
            <person name="Hua-Van A."/>
            <person name="Jonkers W."/>
            <person name="Kazan K."/>
            <person name="Kodira C.D."/>
            <person name="Koehrsen M."/>
            <person name="Kumar L."/>
            <person name="Lee Y.-H."/>
            <person name="Li L."/>
            <person name="Manners J.M."/>
            <person name="Miranda-Saavedra D."/>
            <person name="Mukherjee M."/>
            <person name="Park G."/>
            <person name="Park J."/>
            <person name="Park S.-Y."/>
            <person name="Proctor R.H."/>
            <person name="Regev A."/>
            <person name="Ruiz-Roldan M.C."/>
            <person name="Sain D."/>
            <person name="Sakthikumar S."/>
            <person name="Sykes S."/>
            <person name="Schwartz D.C."/>
            <person name="Turgeon B.G."/>
            <person name="Wapinski I."/>
            <person name="Yoder O."/>
            <person name="Young S."/>
            <person name="Zeng Q."/>
            <person name="Zhou S."/>
            <person name="Galagan J."/>
            <person name="Cuomo C.A."/>
            <person name="Kistler H.C."/>
            <person name="Rep M."/>
        </authorList>
    </citation>
    <scope>NUCLEOTIDE SEQUENCE [LARGE SCALE GENOMIC DNA]</scope>
    <source>
        <strain>M3125 / FGSC 7600</strain>
    </source>
</reference>
<reference evidence="8" key="3">
    <citation type="journal article" date="2020" name="MBio">
        <title>Self-Protection against the Sphingolipid Biosynthesis Inhibitor Fumonisin B1 Is Conferred by a FUM Cluster-Encoded Ceramide Synthase.</title>
        <authorList>
            <person name="Janevska S."/>
            <person name="Ferling I."/>
            <person name="Jojic K."/>
            <person name="Rautschek J."/>
            <person name="Hoefgen S."/>
            <person name="Proctor R.H."/>
            <person name="Hillmann F."/>
            <person name="Valiante V."/>
        </authorList>
    </citation>
    <scope>FUNCTION</scope>
    <scope>SUBCELLULAR LOCATION</scope>
    <scope>INDUCTION BY FUMONISIN B1</scope>
    <scope>DISRUPTION PHENOTYPE</scope>
</reference>
<reference evidence="8" key="4">
    <citation type="journal article" date="2024" name="Toxins">
        <title>Mechanism of Fumonisin Self-Resistance: Fusarium verticillioides Contains Four Fumonisin B1-Insensitive-Ceramide Synthases.</title>
        <authorList>
            <person name="Krska T."/>
            <person name="Twaruschek K."/>
            <person name="Wiesenberger G."/>
            <person name="Berthiller F."/>
            <person name="Adam G."/>
        </authorList>
    </citation>
    <scope>FUNCTION</scope>
    <scope>DISRUPTION PHENOTYPE</scope>
</reference>